<dbReference type="EMBL" id="BX569693">
    <property type="protein sequence ID" value="CAE08232.1"/>
    <property type="molecule type" value="Genomic_DNA"/>
</dbReference>
<dbReference type="RefSeq" id="WP_006043651.1">
    <property type="nucleotide sequence ID" value="NC_005070.1"/>
</dbReference>
<dbReference type="SMR" id="P0A4S5"/>
<dbReference type="STRING" id="84588.SYNW1717"/>
<dbReference type="KEGG" id="syw:SYNW1717"/>
<dbReference type="eggNOG" id="COG4451">
    <property type="taxonomic scope" value="Bacteria"/>
</dbReference>
<dbReference type="HOGENOM" id="CLU_098114_2_0_3"/>
<dbReference type="Proteomes" id="UP000001422">
    <property type="component" value="Chromosome"/>
</dbReference>
<dbReference type="GO" id="GO:0031470">
    <property type="term" value="C:carboxysome"/>
    <property type="evidence" value="ECO:0007669"/>
    <property type="project" value="UniProtKB-SubCell"/>
</dbReference>
<dbReference type="GO" id="GO:0016984">
    <property type="term" value="F:ribulose-bisphosphate carboxylase activity"/>
    <property type="evidence" value="ECO:0007669"/>
    <property type="project" value="UniProtKB-UniRule"/>
</dbReference>
<dbReference type="GO" id="GO:0009853">
    <property type="term" value="P:photorespiration"/>
    <property type="evidence" value="ECO:0007669"/>
    <property type="project" value="UniProtKB-KW"/>
</dbReference>
<dbReference type="GO" id="GO:0019253">
    <property type="term" value="P:reductive pentose-phosphate cycle"/>
    <property type="evidence" value="ECO:0007669"/>
    <property type="project" value="UniProtKB-UniRule"/>
</dbReference>
<dbReference type="CDD" id="cd03527">
    <property type="entry name" value="RuBisCO_small"/>
    <property type="match status" value="1"/>
</dbReference>
<dbReference type="Gene3D" id="3.30.190.10">
    <property type="entry name" value="Ribulose bisphosphate carboxylase, small subunit"/>
    <property type="match status" value="1"/>
</dbReference>
<dbReference type="HAMAP" id="MF_00859">
    <property type="entry name" value="RuBisCO_S_bact"/>
    <property type="match status" value="1"/>
</dbReference>
<dbReference type="InterPro" id="IPR024681">
    <property type="entry name" value="RuBisCO_ssu"/>
</dbReference>
<dbReference type="InterPro" id="IPR000894">
    <property type="entry name" value="RuBisCO_ssu_dom"/>
</dbReference>
<dbReference type="InterPro" id="IPR036385">
    <property type="entry name" value="RuBisCO_ssu_sf"/>
</dbReference>
<dbReference type="PANTHER" id="PTHR31262">
    <property type="entry name" value="RIBULOSE BISPHOSPHATE CARBOXYLASE SMALL CHAIN 1, CHLOROPLASTIC"/>
    <property type="match status" value="1"/>
</dbReference>
<dbReference type="Pfam" id="PF00101">
    <property type="entry name" value="RuBisCO_small"/>
    <property type="match status" value="1"/>
</dbReference>
<dbReference type="SMART" id="SM00961">
    <property type="entry name" value="RuBisCO_small"/>
    <property type="match status" value="1"/>
</dbReference>
<dbReference type="SUPFAM" id="SSF55239">
    <property type="entry name" value="RuBisCO, small subunit"/>
    <property type="match status" value="1"/>
</dbReference>
<gene>
    <name evidence="1" type="primary">cbbS</name>
    <name evidence="1" type="synonym">rbcS</name>
    <name type="ordered locus">SYNW1717</name>
</gene>
<comment type="function">
    <text evidence="1">RuBisCO catalyzes two reactions: the carboxylation of D-ribulose 1,5-bisphosphate, the primary event in carbon dioxide fixation, as well as the oxidative fragmentation of the pentose substrate in the photorespiration process. Both reactions occur simultaneously and in competition at the same active site. Although the small subunit is not catalytic it is essential for maximal activity.</text>
</comment>
<comment type="subunit">
    <text evidence="1">Heterohexadecamer of 8 large and 8 small subunits.</text>
</comment>
<comment type="subcellular location">
    <subcellularLocation>
        <location evidence="1 4">Carboxysome</location>
    </subcellularLocation>
    <text evidence="3">This cyanobacterium makes alpha-type carboxysomes.</text>
</comment>
<comment type="induction">
    <text evidence="2">Cells grown on urea as a nitrogen source have more enzyme activity than those grown on nitrate (at protein level). RuBisCO activity of urea- but not nitrate-grown cells decreases with rising temperature (from 25 to 28 degrees Celsius, present versus predicted future ocean temperatures); there is only one RuBisCO in this cyanobacterium.</text>
</comment>
<comment type="miscellaneous">
    <text evidence="1">The basic functional RuBisCO is composed of a large chain homodimer in a 'head-to-tail' conformation. In form I RuBisCO this homodimer is arranged in a barrel-like tetramer with the small subunits forming a tetrameric 'cap' on each end of the 'barrel'.</text>
</comment>
<comment type="similarity">
    <text evidence="1">Belongs to the RuBisCO small chain family.</text>
</comment>
<proteinExistence type="evidence at protein level"/>
<sequence length="113" mass="12943">MPFQSTVGDYQTVATLETFGFLPPMTQDEIYDQIAYIIAQGWSPLVEHVHPSNSMATYWSYWKLPFFGEKDLNVVVSELEACHRAYPDHHVRIVGYDAYTQSQGACFVVFEGR</sequence>
<evidence type="ECO:0000255" key="1">
    <source>
        <dbReference type="HAMAP-Rule" id="MF_00859"/>
    </source>
</evidence>
<evidence type="ECO:0000269" key="2">
    <source>
    </source>
</evidence>
<evidence type="ECO:0000305" key="3"/>
<evidence type="ECO:0000305" key="4">
    <source>
    </source>
</evidence>
<organism>
    <name type="scientific">Parasynechococcus marenigrum (strain WH8102)</name>
    <dbReference type="NCBI Taxonomy" id="84588"/>
    <lineage>
        <taxon>Bacteria</taxon>
        <taxon>Bacillati</taxon>
        <taxon>Cyanobacteriota</taxon>
        <taxon>Cyanophyceae</taxon>
        <taxon>Synechococcales</taxon>
        <taxon>Prochlorococcaceae</taxon>
        <taxon>Parasynechococcus</taxon>
        <taxon>Parasynechococcus marenigrum</taxon>
    </lineage>
</organism>
<accession>P0A4S5</accession>
<accession>P96487</accession>
<name>RBS_PARMW</name>
<keyword id="KW-1283">Bacterial microcompartment</keyword>
<keyword id="KW-0113">Calvin cycle</keyword>
<keyword id="KW-0120">Carbon dioxide fixation</keyword>
<keyword id="KW-1282">Carboxysome</keyword>
<keyword id="KW-0601">Photorespiration</keyword>
<keyword id="KW-0602">Photosynthesis</keyword>
<feature type="chain" id="PRO_0000198626" description="Ribulose bisphosphate carboxylase small subunit">
    <location>
        <begin position="1"/>
        <end position="113"/>
    </location>
</feature>
<reference key="1">
    <citation type="journal article" date="2003" name="Nature">
        <title>The genome of a motile marine Synechococcus.</title>
        <authorList>
            <person name="Palenik B."/>
            <person name="Brahamsha B."/>
            <person name="Larimer F.W."/>
            <person name="Land M.L."/>
            <person name="Hauser L."/>
            <person name="Chain P."/>
            <person name="Lamerdin J.E."/>
            <person name="Regala W."/>
            <person name="Allen E.E."/>
            <person name="McCarren J."/>
            <person name="Paulsen I.T."/>
            <person name="Dufresne A."/>
            <person name="Partensky F."/>
            <person name="Webb E.A."/>
            <person name="Waterbury J."/>
        </authorList>
    </citation>
    <scope>NUCLEOTIDE SEQUENCE [LARGE SCALE GENOMIC DNA]</scope>
    <source>
        <strain>WH8102</strain>
    </source>
</reference>
<reference key="2">
    <citation type="journal article" date="2019" name="Front. Microbiol.">
        <title>Proteomic Response to Rising Temperature in the Marine Cyanobacterium Synechococcus Grown in Different Nitrogen Sources.</title>
        <authorList>
            <person name="Li Y.Y."/>
            <person name="Chen X.H."/>
            <person name="Xue C."/>
            <person name="Zhang H."/>
            <person name="Sun G."/>
            <person name="Xie Z.X."/>
            <person name="Lin L."/>
            <person name="Wang D.Z."/>
        </authorList>
    </citation>
    <scope>IDENTIFICATION BY MASS SPECTROMETRY</scope>
    <scope>SUBCELLULAR LOCATION</scope>
    <scope>INDUCTION</scope>
    <source>
        <strain>WH8102</strain>
    </source>
</reference>
<protein>
    <recommendedName>
        <fullName evidence="1">Ribulose bisphosphate carboxylase small subunit</fullName>
        <shortName evidence="1">RuBisCO small subunit</shortName>
    </recommendedName>
</protein>